<name>PQQD_PSEU2</name>
<feature type="chain" id="PRO_1000061689" description="PqqA binding protein">
    <location>
        <begin position="1"/>
        <end position="94"/>
    </location>
</feature>
<dbReference type="EMBL" id="CP000075">
    <property type="protein sequence ID" value="AAY39700.1"/>
    <property type="molecule type" value="Genomic_DNA"/>
</dbReference>
<dbReference type="RefSeq" id="WP_011269164.1">
    <property type="nucleotide sequence ID" value="NC_007005.1"/>
</dbReference>
<dbReference type="RefSeq" id="YP_237738.1">
    <property type="nucleotide sequence ID" value="NC_007005.1"/>
</dbReference>
<dbReference type="SMR" id="Q4ZMC2"/>
<dbReference type="STRING" id="205918.Psyr_4673"/>
<dbReference type="KEGG" id="psb:Psyr_4673"/>
<dbReference type="PATRIC" id="fig|205918.7.peg.4819"/>
<dbReference type="eggNOG" id="ENOG5032Z81">
    <property type="taxonomic scope" value="Bacteria"/>
</dbReference>
<dbReference type="HOGENOM" id="CLU_163864_2_1_6"/>
<dbReference type="OrthoDB" id="7356791at2"/>
<dbReference type="UniPathway" id="UPA00539"/>
<dbReference type="Proteomes" id="UP000000426">
    <property type="component" value="Chromosome"/>
</dbReference>
<dbReference type="GO" id="GO:0048038">
    <property type="term" value="F:quinone binding"/>
    <property type="evidence" value="ECO:0007669"/>
    <property type="project" value="InterPro"/>
</dbReference>
<dbReference type="GO" id="GO:0018189">
    <property type="term" value="P:pyrroloquinoline quinone biosynthetic process"/>
    <property type="evidence" value="ECO:0007669"/>
    <property type="project" value="UniProtKB-UniRule"/>
</dbReference>
<dbReference type="Gene3D" id="1.10.10.1150">
    <property type="entry name" value="Coenzyme PQQ synthesis protein D (PqqD)"/>
    <property type="match status" value="1"/>
</dbReference>
<dbReference type="HAMAP" id="MF_00655">
    <property type="entry name" value="PQQ_syn_PqqD"/>
    <property type="match status" value="1"/>
</dbReference>
<dbReference type="InterPro" id="IPR008792">
    <property type="entry name" value="PQQD"/>
</dbReference>
<dbReference type="InterPro" id="IPR022479">
    <property type="entry name" value="PqqD_bac"/>
</dbReference>
<dbReference type="InterPro" id="IPR041881">
    <property type="entry name" value="PqqD_sf"/>
</dbReference>
<dbReference type="NCBIfam" id="TIGR03859">
    <property type="entry name" value="PQQ_PqqD"/>
    <property type="match status" value="1"/>
</dbReference>
<dbReference type="NCBIfam" id="NF002535">
    <property type="entry name" value="PRK02079.1"/>
    <property type="match status" value="1"/>
</dbReference>
<dbReference type="Pfam" id="PF05402">
    <property type="entry name" value="PqqD"/>
    <property type="match status" value="1"/>
</dbReference>
<protein>
    <recommendedName>
        <fullName evidence="1">PqqA binding protein</fullName>
    </recommendedName>
    <alternativeName>
        <fullName evidence="1">Coenzyme PQQ synthesis protein D</fullName>
    </alternativeName>
    <alternativeName>
        <fullName evidence="1">Pyrroloquinoline quinone biosynthesis protein D</fullName>
    </alternativeName>
</protein>
<sequence length="94" mass="10774">MKHDPQFRALTPKWHQGYRFQYEPAQKAHVVLYPEGMIKLNESAALIGGLIDGKRTIAAIIDELHQQFPNVPELGMDVDEFMEGAKKKNWIDLV</sequence>
<keyword id="KW-0884">PQQ biosynthesis</keyword>
<organism>
    <name type="scientific">Pseudomonas syringae pv. syringae (strain B728a)</name>
    <dbReference type="NCBI Taxonomy" id="205918"/>
    <lineage>
        <taxon>Bacteria</taxon>
        <taxon>Pseudomonadati</taxon>
        <taxon>Pseudomonadota</taxon>
        <taxon>Gammaproteobacteria</taxon>
        <taxon>Pseudomonadales</taxon>
        <taxon>Pseudomonadaceae</taxon>
        <taxon>Pseudomonas</taxon>
        <taxon>Pseudomonas syringae</taxon>
    </lineage>
</organism>
<gene>
    <name evidence="1" type="primary">pqqD</name>
    <name type="ordered locus">Psyr_4673</name>
</gene>
<comment type="function">
    <text evidence="1">Functions as a PqqA binding protein and presents PqqA to PqqE, in the pyrroloquinoline quinone (PQQ) biosynthetic pathway.</text>
</comment>
<comment type="pathway">
    <text evidence="1">Cofactor biosynthesis; pyrroloquinoline quinone biosynthesis.</text>
</comment>
<comment type="subunit">
    <text evidence="1">Monomer. Interacts with PqqE.</text>
</comment>
<comment type="similarity">
    <text evidence="1">Belongs to the PqqD family.</text>
</comment>
<proteinExistence type="inferred from homology"/>
<reference key="1">
    <citation type="journal article" date="2005" name="Proc. Natl. Acad. Sci. U.S.A.">
        <title>Comparison of the complete genome sequences of Pseudomonas syringae pv. syringae B728a and pv. tomato DC3000.</title>
        <authorList>
            <person name="Feil H."/>
            <person name="Feil W.S."/>
            <person name="Chain P."/>
            <person name="Larimer F."/>
            <person name="Dibartolo G."/>
            <person name="Copeland A."/>
            <person name="Lykidis A."/>
            <person name="Trong S."/>
            <person name="Nolan M."/>
            <person name="Goltsman E."/>
            <person name="Thiel J."/>
            <person name="Malfatti S."/>
            <person name="Loper J.E."/>
            <person name="Lapidus A."/>
            <person name="Detter J.C."/>
            <person name="Land M."/>
            <person name="Richardson P.M."/>
            <person name="Kyrpides N.C."/>
            <person name="Ivanova N."/>
            <person name="Lindow S.E."/>
        </authorList>
    </citation>
    <scope>NUCLEOTIDE SEQUENCE [LARGE SCALE GENOMIC DNA]</scope>
    <source>
        <strain>B728a</strain>
    </source>
</reference>
<accession>Q4ZMC2</accession>
<evidence type="ECO:0000255" key="1">
    <source>
        <dbReference type="HAMAP-Rule" id="MF_00655"/>
    </source>
</evidence>